<reference key="1">
    <citation type="journal article" date="2000" name="Eur. J. Biochem.">
        <title>Identification of novel periviscerokinins from single neurohaemal release sites in insects. MS/MS fragmentation complemented by Edman degradation.</title>
        <authorList>
            <person name="Predel R."/>
            <person name="Kellner R."/>
            <person name="Baggerman G."/>
            <person name="Steinmetzer T."/>
            <person name="Schoofs L."/>
        </authorList>
    </citation>
    <scope>PROTEIN SEQUENCE</scope>
    <scope>FUNCTION</scope>
    <scope>MASS SPECTROMETRY</scope>
    <scope>AMIDATION AT VAL-11</scope>
    <source>
        <tissue>Abdominal perisympathetic organs</tissue>
    </source>
</reference>
<reference key="2">
    <citation type="journal article" date="2009" name="BMC Evol. Biol.">
        <title>A proteomic approach for studying insect phylogeny: CAPA peptides of ancient insect taxa (Dictyoptera, Blattoptera) as a test case.</title>
        <authorList>
            <person name="Roth S."/>
            <person name="Fromm B."/>
            <person name="Gaede G."/>
            <person name="Predel R."/>
        </authorList>
    </citation>
    <scope>PROTEIN SEQUENCE</scope>
    <scope>AMIDATION AT VAL-11</scope>
    <source>
        <tissue>Abdominal perisympathetic organs</tissue>
    </source>
</reference>
<comment type="function">
    <text evidence="1">Mediates visceral muscle contractile activity (myotropic activity).</text>
</comment>
<comment type="subcellular location">
    <subcellularLocation>
        <location>Secreted</location>
    </subcellularLocation>
</comment>
<comment type="mass spectrometry"/>
<comment type="similarity">
    <text evidence="3">Belongs to the periviscerokinin family.</text>
</comment>
<organism>
    <name type="scientific">Gromphadorhina portentosa</name>
    <name type="common">Madagascan hissing cockroach</name>
    <dbReference type="NCBI Taxonomy" id="36953"/>
    <lineage>
        <taxon>Eukaryota</taxon>
        <taxon>Metazoa</taxon>
        <taxon>Ecdysozoa</taxon>
        <taxon>Arthropoda</taxon>
        <taxon>Hexapoda</taxon>
        <taxon>Insecta</taxon>
        <taxon>Pterygota</taxon>
        <taxon>Neoptera</taxon>
        <taxon>Polyneoptera</taxon>
        <taxon>Dictyoptera</taxon>
        <taxon>Blattodea</taxon>
        <taxon>Blaberoidea</taxon>
        <taxon>Blaberidae</taxon>
        <taxon>Oxyhaloinae</taxon>
        <taxon>Gromphadorhina</taxon>
    </lineage>
</organism>
<protein>
    <recommendedName>
        <fullName>Periviscerokinin-2</fullName>
        <shortName>GroPo-PVK-2</shortName>
        <shortName>PVK-2</shortName>
    </recommendedName>
</protein>
<evidence type="ECO:0000269" key="1">
    <source>
    </source>
</evidence>
<evidence type="ECO:0000269" key="2">
    <source>
    </source>
</evidence>
<evidence type="ECO:0000305" key="3"/>
<sequence>GSSGLISMPRV</sequence>
<proteinExistence type="evidence at protein level"/>
<dbReference type="GO" id="GO:0005576">
    <property type="term" value="C:extracellular region"/>
    <property type="evidence" value="ECO:0007669"/>
    <property type="project" value="UniProtKB-SubCell"/>
</dbReference>
<dbReference type="GO" id="GO:0007218">
    <property type="term" value="P:neuropeptide signaling pathway"/>
    <property type="evidence" value="ECO:0007669"/>
    <property type="project" value="UniProtKB-KW"/>
</dbReference>
<dbReference type="InterPro" id="IPR013231">
    <property type="entry name" value="Periviscerokinin"/>
</dbReference>
<dbReference type="Pfam" id="PF08259">
    <property type="entry name" value="Periviscerokin"/>
    <property type="match status" value="1"/>
</dbReference>
<accession>P83930</accession>
<accession>P82699</accession>
<keyword id="KW-0027">Amidation</keyword>
<keyword id="KW-0903">Direct protein sequencing</keyword>
<keyword id="KW-0527">Neuropeptide</keyword>
<keyword id="KW-0964">Secreted</keyword>
<name>PVK2_GROPO</name>
<feature type="peptide" id="PRO_0000044262" description="Periviscerokinin-2">
    <location>
        <begin position="1"/>
        <end position="11"/>
    </location>
</feature>
<feature type="modified residue" description="Valine amide" evidence="1 2">
    <location>
        <position position="11"/>
    </location>
</feature>